<proteinExistence type="inferred from homology"/>
<organism>
    <name type="scientific">Pyrococcus furiosus (strain ATCC 43587 / DSM 3638 / JCM 8422 / Vc1)</name>
    <dbReference type="NCBI Taxonomy" id="186497"/>
    <lineage>
        <taxon>Archaea</taxon>
        <taxon>Methanobacteriati</taxon>
        <taxon>Methanobacteriota</taxon>
        <taxon>Thermococci</taxon>
        <taxon>Thermococcales</taxon>
        <taxon>Thermococcaceae</taxon>
        <taxon>Pyrococcus</taxon>
    </lineage>
</organism>
<feature type="chain" id="PRO_0000156125" description="Diphthine synthase">
    <location>
        <begin position="1"/>
        <end position="269"/>
    </location>
</feature>
<feature type="binding site" evidence="1">
    <location>
        <position position="10"/>
    </location>
    <ligand>
        <name>S-adenosyl-L-methionine</name>
        <dbReference type="ChEBI" id="CHEBI:59789"/>
    </ligand>
</feature>
<feature type="binding site" evidence="1">
    <location>
        <position position="87"/>
    </location>
    <ligand>
        <name>S-adenosyl-L-methionine</name>
        <dbReference type="ChEBI" id="CHEBI:59789"/>
    </ligand>
</feature>
<feature type="binding site" evidence="1">
    <location>
        <position position="90"/>
    </location>
    <ligand>
        <name>S-adenosyl-L-methionine</name>
        <dbReference type="ChEBI" id="CHEBI:59789"/>
    </ligand>
</feature>
<feature type="binding site" evidence="1">
    <location>
        <begin position="115"/>
        <end position="116"/>
    </location>
    <ligand>
        <name>S-adenosyl-L-methionine</name>
        <dbReference type="ChEBI" id="CHEBI:59789"/>
    </ligand>
</feature>
<feature type="binding site" evidence="1">
    <location>
        <position position="166"/>
    </location>
    <ligand>
        <name>S-adenosyl-L-methionine</name>
        <dbReference type="ChEBI" id="CHEBI:59789"/>
    </ligand>
</feature>
<feature type="binding site" evidence="1">
    <location>
        <position position="209"/>
    </location>
    <ligand>
        <name>S-adenosyl-L-methionine</name>
        <dbReference type="ChEBI" id="CHEBI:59789"/>
    </ligand>
</feature>
<feature type="binding site" evidence="1">
    <location>
        <position position="234"/>
    </location>
    <ligand>
        <name>S-adenosyl-L-methionine</name>
        <dbReference type="ChEBI" id="CHEBI:59789"/>
    </ligand>
</feature>
<gene>
    <name evidence="1" type="primary">dphB</name>
    <name type="ordered locus">PF0595</name>
</gene>
<keyword id="KW-0489">Methyltransferase</keyword>
<keyword id="KW-1185">Reference proteome</keyword>
<keyword id="KW-0949">S-adenosyl-L-methionine</keyword>
<keyword id="KW-0808">Transferase</keyword>
<accession>Q8U377</accession>
<accession>O05688</accession>
<protein>
    <recommendedName>
        <fullName evidence="1">Diphthine synthase</fullName>
        <ecNumber evidence="1">2.1.1.98</ecNumber>
    </recommendedName>
    <alternativeName>
        <fullName evidence="1">Diphthamide biosynthesis methyltransferase</fullName>
    </alternativeName>
</protein>
<evidence type="ECO:0000255" key="1">
    <source>
        <dbReference type="HAMAP-Rule" id="MF_01084"/>
    </source>
</evidence>
<evidence type="ECO:0000305" key="2"/>
<reference key="1">
    <citation type="journal article" date="1999" name="Genetics">
        <title>Divergence of the hyperthermophilic archaea Pyrococcus furiosus and P. horikoshii inferred from complete genomic sequences.</title>
        <authorList>
            <person name="Maeder D.L."/>
            <person name="Weiss R.B."/>
            <person name="Dunn D.M."/>
            <person name="Cherry J.L."/>
            <person name="Gonzalez J.M."/>
            <person name="DiRuggiero J."/>
            <person name="Robb F.T."/>
        </authorList>
    </citation>
    <scope>NUCLEOTIDE SEQUENCE [LARGE SCALE GENOMIC DNA]</scope>
    <source>
        <strain>ATCC 43587 / DSM 3638 / JCM 8422 / Vc1</strain>
    </source>
</reference>
<reference key="2">
    <citation type="journal article" date="1997" name="Eur. J. Biochem.">
        <title>Isolation of the gene encoding Pyrococcus furiosus ornithine carbamoyltransferase and study of its expression profile in vivo and in vitro.</title>
        <authorList>
            <person name="Roovers M."/>
            <person name="Hetcke C."/>
            <person name="Legrain C."/>
            <person name="Thomm M."/>
            <person name="Glansdorff N."/>
        </authorList>
    </citation>
    <scope>NUCLEOTIDE SEQUENCE [GENOMIC DNA] OF 38-269</scope>
    <source>
        <strain>ATCC 43587 / DSM 3638 / JCM 8422 / Vc1</strain>
    </source>
</reference>
<comment type="function">
    <text evidence="1">S-adenosyl-L-methionine-dependent methyltransferase that catalyzes the trimethylation of the amino group of the modified target histidine residue in translation elongation factor 2 (EF-2), to form an intermediate called diphthine. The three successive methylation reactions represent the second step of diphthamide biosynthesis.</text>
</comment>
<comment type="catalytic activity">
    <reaction evidence="1">
        <text>2-[(3S)-amino-3-carboxypropyl]-L-histidyl-[translation elongation factor 2] + 3 S-adenosyl-L-methionine = diphthine-[translation elongation factor 2] + 3 S-adenosyl-L-homocysteine + 3 H(+)</text>
        <dbReference type="Rhea" id="RHEA:36415"/>
        <dbReference type="Rhea" id="RHEA-COMP:9749"/>
        <dbReference type="Rhea" id="RHEA-COMP:10172"/>
        <dbReference type="ChEBI" id="CHEBI:15378"/>
        <dbReference type="ChEBI" id="CHEBI:57856"/>
        <dbReference type="ChEBI" id="CHEBI:59789"/>
        <dbReference type="ChEBI" id="CHEBI:73995"/>
        <dbReference type="ChEBI" id="CHEBI:82696"/>
        <dbReference type="EC" id="2.1.1.98"/>
    </reaction>
</comment>
<comment type="pathway">
    <text evidence="1">Protein modification; peptidyl-diphthamide biosynthesis.</text>
</comment>
<comment type="subunit">
    <text evidence="1">Homodimer.</text>
</comment>
<comment type="similarity">
    <text evidence="1">Belongs to the diphthine synthase family.</text>
</comment>
<comment type="sequence caution" evidence="2">
    <conflict type="frameshift">
        <sequence resource="EMBL-CDS" id="CAA73259"/>
    </conflict>
</comment>
<sequence length="269" mass="30217">MPLYFIGLGLYDEKDITLKGLEIAKRCDKVYAEFYTSLMAGTTLEKIEEVIGKKIIVLNREDVEMNFEKIVLPEAKEKEVAFLTAGDPMVATTHAELRIRAKRMGVESYVIHAPSIYSAVAITGLHIYKFGKSATVAYPEGNWFPTSYYDVVKENLERGLHTLLFLDIKAEKGKYMTANEAMELLLKVEEMRGENVFTPNTLVVVLGRAGSLNPTIRAGYVKDMIKEDFGKQPHVLIVPGKLHVVEAEYLVEIAGAPKEILEQFAPRKM</sequence>
<dbReference type="EC" id="2.1.1.98" evidence="1"/>
<dbReference type="EMBL" id="AE009950">
    <property type="protein sequence ID" value="AAL80719.1"/>
    <property type="molecule type" value="Genomic_DNA"/>
</dbReference>
<dbReference type="EMBL" id="Y12727">
    <property type="protein sequence ID" value="CAA73259.1"/>
    <property type="status" value="ALT_FRAME"/>
    <property type="molecule type" value="Genomic_DNA"/>
</dbReference>
<dbReference type="SMR" id="Q8U377"/>
<dbReference type="STRING" id="186497.PF0595"/>
<dbReference type="PaxDb" id="186497-PF0595"/>
<dbReference type="KEGG" id="pfu:PF0595"/>
<dbReference type="PATRIC" id="fig|186497.12.peg.624"/>
<dbReference type="eggNOG" id="arCOG04161">
    <property type="taxonomic scope" value="Archaea"/>
</dbReference>
<dbReference type="HOGENOM" id="CLU_066040_0_0_2"/>
<dbReference type="OrthoDB" id="39139at2157"/>
<dbReference type="PhylomeDB" id="Q8U377"/>
<dbReference type="UniPathway" id="UPA00559"/>
<dbReference type="Proteomes" id="UP000001013">
    <property type="component" value="Chromosome"/>
</dbReference>
<dbReference type="GO" id="GO:0004164">
    <property type="term" value="F:diphthine synthase activity"/>
    <property type="evidence" value="ECO:0007669"/>
    <property type="project" value="UniProtKB-UniRule"/>
</dbReference>
<dbReference type="GO" id="GO:0032259">
    <property type="term" value="P:methylation"/>
    <property type="evidence" value="ECO:0007669"/>
    <property type="project" value="UniProtKB-KW"/>
</dbReference>
<dbReference type="GO" id="GO:0017183">
    <property type="term" value="P:protein histidyl modification to diphthamide"/>
    <property type="evidence" value="ECO:0007669"/>
    <property type="project" value="UniProtKB-UniRule"/>
</dbReference>
<dbReference type="CDD" id="cd11647">
    <property type="entry name" value="DHP5_DphB"/>
    <property type="match status" value="1"/>
</dbReference>
<dbReference type="FunFam" id="3.30.950.10:FF:000004">
    <property type="entry name" value="Diphthine synthase putative"/>
    <property type="match status" value="1"/>
</dbReference>
<dbReference type="FunFam" id="3.40.1010.10:FF:000004">
    <property type="entry name" value="Putative diphthine synthase"/>
    <property type="match status" value="1"/>
</dbReference>
<dbReference type="Gene3D" id="3.40.1010.10">
    <property type="entry name" value="Cobalt-precorrin-4 Transmethylase, Domain 1"/>
    <property type="match status" value="1"/>
</dbReference>
<dbReference type="Gene3D" id="3.30.950.10">
    <property type="entry name" value="Methyltransferase, Cobalt-precorrin-4 Transmethylase, Domain 2"/>
    <property type="match status" value="1"/>
</dbReference>
<dbReference type="HAMAP" id="MF_01084">
    <property type="entry name" value="Diphthine_synth"/>
    <property type="match status" value="1"/>
</dbReference>
<dbReference type="InterPro" id="IPR000878">
    <property type="entry name" value="4pyrrol_Mease"/>
</dbReference>
<dbReference type="InterPro" id="IPR035996">
    <property type="entry name" value="4pyrrol_Methylase_sf"/>
</dbReference>
<dbReference type="InterPro" id="IPR014777">
    <property type="entry name" value="4pyrrole_Mease_sub1"/>
</dbReference>
<dbReference type="InterPro" id="IPR014776">
    <property type="entry name" value="4pyrrole_Mease_sub2"/>
</dbReference>
<dbReference type="InterPro" id="IPR004551">
    <property type="entry name" value="Dphthn_synthase"/>
</dbReference>
<dbReference type="NCBIfam" id="TIGR00522">
    <property type="entry name" value="dph5"/>
    <property type="match status" value="1"/>
</dbReference>
<dbReference type="PANTHER" id="PTHR10882:SF0">
    <property type="entry name" value="DIPHTHINE METHYL ESTER SYNTHASE"/>
    <property type="match status" value="1"/>
</dbReference>
<dbReference type="PANTHER" id="PTHR10882">
    <property type="entry name" value="DIPHTHINE SYNTHASE"/>
    <property type="match status" value="1"/>
</dbReference>
<dbReference type="Pfam" id="PF00590">
    <property type="entry name" value="TP_methylase"/>
    <property type="match status" value="1"/>
</dbReference>
<dbReference type="PIRSF" id="PIRSF036432">
    <property type="entry name" value="Diphthine_synth"/>
    <property type="match status" value="1"/>
</dbReference>
<dbReference type="SUPFAM" id="SSF53790">
    <property type="entry name" value="Tetrapyrrole methylase"/>
    <property type="match status" value="1"/>
</dbReference>
<name>DPHB_PYRFU</name>